<reference key="1">
    <citation type="submission" date="2006-09" db="EMBL/GenBank/DDBJ databases">
        <title>NISC comparative sequencing initiative.</title>
        <authorList>
            <person name="Antonellis A."/>
            <person name="Ayele K."/>
            <person name="Benjamin B."/>
            <person name="Blakesley R.W."/>
            <person name="Boakye A."/>
            <person name="Bouffard G.G."/>
            <person name="Brinkley C."/>
            <person name="Brooks S."/>
            <person name="Chu G."/>
            <person name="Coleman H."/>
            <person name="Engle J."/>
            <person name="Gestole M."/>
            <person name="Greene A."/>
            <person name="Guan X."/>
            <person name="Gupta J."/>
            <person name="Haghighi P."/>
            <person name="Han J."/>
            <person name="Hansen N."/>
            <person name="Ho S.-L."/>
            <person name="Hu P."/>
            <person name="Hunter G."/>
            <person name="Hurle B."/>
            <person name="Idol J.R."/>
            <person name="Kwong P."/>
            <person name="Laric P."/>
            <person name="Larson S."/>
            <person name="Lee-Lin S.-Q."/>
            <person name="Legaspi R."/>
            <person name="Madden M."/>
            <person name="Maduro Q.L."/>
            <person name="Maduro V.B."/>
            <person name="Margulies E.H."/>
            <person name="Masiello C."/>
            <person name="Maskeri B."/>
            <person name="McDowell J."/>
            <person name="Mojidi H.A."/>
            <person name="Mullikin J.C."/>
            <person name="Oestreicher J.S."/>
            <person name="Park M."/>
            <person name="Portnoy M.E."/>
            <person name="Prasad A."/>
            <person name="Puri O."/>
            <person name="Reddix-Dugue N."/>
            <person name="Schandler K."/>
            <person name="Schueler M.G."/>
            <person name="Sison C."/>
            <person name="Stantripop S."/>
            <person name="Stephen E."/>
            <person name="Taye A."/>
            <person name="Thomas J.W."/>
            <person name="Thomas P.J."/>
            <person name="Tsipouri V."/>
            <person name="Ung L."/>
            <person name="Vogt J.L."/>
            <person name="Wetherby K.D."/>
            <person name="Young A."/>
            <person name="Green E.D."/>
        </authorList>
    </citation>
    <scope>NUCLEOTIDE SEQUENCE [LARGE SCALE GENOMIC DNA]</scope>
</reference>
<feature type="chain" id="PRO_0000260331" description="Testin">
    <location>
        <begin position="1"/>
        <end position="421"/>
    </location>
</feature>
<feature type="domain" description="PET" evidence="3">
    <location>
        <begin position="92"/>
        <end position="199"/>
    </location>
</feature>
<feature type="domain" description="LIM zinc-binding 1" evidence="2">
    <location>
        <begin position="234"/>
        <end position="297"/>
    </location>
</feature>
<feature type="domain" description="LIM zinc-binding 2" evidence="2">
    <location>
        <begin position="299"/>
        <end position="359"/>
    </location>
</feature>
<feature type="domain" description="LIM zinc-binding 3" evidence="2">
    <location>
        <begin position="362"/>
        <end position="421"/>
    </location>
</feature>
<feature type="region of interest" description="Disordered" evidence="4">
    <location>
        <begin position="133"/>
        <end position="164"/>
    </location>
</feature>
<feature type="region of interest" description="Disordered" evidence="4">
    <location>
        <begin position="193"/>
        <end position="213"/>
    </location>
</feature>
<feature type="compositionally biased region" description="Basic and acidic residues" evidence="4">
    <location>
        <begin position="155"/>
        <end position="164"/>
    </location>
</feature>
<dbReference type="EMBL" id="DP000195">
    <property type="protein sequence ID" value="ABJ08869.1"/>
    <property type="molecule type" value="Genomic_DNA"/>
</dbReference>
<dbReference type="RefSeq" id="XP_065795380.1">
    <property type="nucleotide sequence ID" value="XM_065939308.1"/>
</dbReference>
<dbReference type="SMR" id="Q07DX3"/>
<dbReference type="GeneID" id="136170811"/>
<dbReference type="GO" id="GO:0005737">
    <property type="term" value="C:cytoplasm"/>
    <property type="evidence" value="ECO:0000250"/>
    <property type="project" value="UniProtKB"/>
</dbReference>
<dbReference type="GO" id="GO:0005925">
    <property type="term" value="C:focal adhesion"/>
    <property type="evidence" value="ECO:0007669"/>
    <property type="project" value="UniProtKB-SubCell"/>
</dbReference>
<dbReference type="GO" id="GO:0008270">
    <property type="term" value="F:zinc ion binding"/>
    <property type="evidence" value="ECO:0000250"/>
    <property type="project" value="UniProtKB"/>
</dbReference>
<dbReference type="GO" id="GO:0008285">
    <property type="term" value="P:negative regulation of cell population proliferation"/>
    <property type="evidence" value="ECO:0000250"/>
    <property type="project" value="UniProtKB"/>
</dbReference>
<dbReference type="CDD" id="cd09413">
    <property type="entry name" value="LIM1_Testin"/>
    <property type="match status" value="1"/>
</dbReference>
<dbReference type="CDD" id="cd09416">
    <property type="entry name" value="LIM2_Testin"/>
    <property type="match status" value="1"/>
</dbReference>
<dbReference type="CDD" id="cd09419">
    <property type="entry name" value="LIM3_Testin"/>
    <property type="match status" value="1"/>
</dbReference>
<dbReference type="CDD" id="cd09829">
    <property type="entry name" value="PET_testin"/>
    <property type="match status" value="1"/>
</dbReference>
<dbReference type="FunFam" id="2.10.110.10:FF:000061">
    <property type="entry name" value="Testin"/>
    <property type="match status" value="1"/>
</dbReference>
<dbReference type="FunFam" id="2.10.110.10:FF:000065">
    <property type="entry name" value="Testin"/>
    <property type="match status" value="1"/>
</dbReference>
<dbReference type="FunFam" id="2.10.110.10:FF:000005">
    <property type="entry name" value="Testin isoform 1"/>
    <property type="match status" value="1"/>
</dbReference>
<dbReference type="Gene3D" id="2.10.110.10">
    <property type="entry name" value="Cysteine Rich Protein"/>
    <property type="match status" value="3"/>
</dbReference>
<dbReference type="InterPro" id="IPR034958">
    <property type="entry name" value="LIM1_Testin"/>
</dbReference>
<dbReference type="InterPro" id="IPR034959">
    <property type="entry name" value="LIM2_Testin"/>
</dbReference>
<dbReference type="InterPro" id="IPR034960">
    <property type="entry name" value="LIM3_Testin"/>
</dbReference>
<dbReference type="InterPro" id="IPR010442">
    <property type="entry name" value="PET_domain"/>
</dbReference>
<dbReference type="InterPro" id="IPR033724">
    <property type="entry name" value="PET_testin"/>
</dbReference>
<dbReference type="InterPro" id="IPR047120">
    <property type="entry name" value="Pk/Esn/Tes"/>
</dbReference>
<dbReference type="InterPro" id="IPR001781">
    <property type="entry name" value="Znf_LIM"/>
</dbReference>
<dbReference type="PANTHER" id="PTHR24211">
    <property type="entry name" value="LIM DOMAIN-CONTAINING PROTEIN"/>
    <property type="match status" value="1"/>
</dbReference>
<dbReference type="PANTHER" id="PTHR24211:SF1">
    <property type="entry name" value="TESTIN"/>
    <property type="match status" value="1"/>
</dbReference>
<dbReference type="Pfam" id="PF00412">
    <property type="entry name" value="LIM"/>
    <property type="match status" value="3"/>
</dbReference>
<dbReference type="Pfam" id="PF06297">
    <property type="entry name" value="PET"/>
    <property type="match status" value="1"/>
</dbReference>
<dbReference type="SMART" id="SM00132">
    <property type="entry name" value="LIM"/>
    <property type="match status" value="3"/>
</dbReference>
<dbReference type="SUPFAM" id="SSF57716">
    <property type="entry name" value="Glucocorticoid receptor-like (DNA-binding domain)"/>
    <property type="match status" value="2"/>
</dbReference>
<dbReference type="PROSITE" id="PS00478">
    <property type="entry name" value="LIM_DOMAIN_1"/>
    <property type="match status" value="2"/>
</dbReference>
<dbReference type="PROSITE" id="PS50023">
    <property type="entry name" value="LIM_DOMAIN_2"/>
    <property type="match status" value="3"/>
</dbReference>
<dbReference type="PROSITE" id="PS51303">
    <property type="entry name" value="PET"/>
    <property type="match status" value="1"/>
</dbReference>
<proteinExistence type="inferred from homology"/>
<accession>Q07DX3</accession>
<comment type="function">
    <text evidence="1">Scaffold protein that may play a role in cell adhesion, cell spreading and in the reorganization of the actin cytoskeleton. Plays a role in the regulation of cell proliferation. May act as a tumor suppressor (By similarity).</text>
</comment>
<comment type="subunit">
    <text evidence="1">Interacts via LIM domain 1 with ZYX. Interacts (via LIM domain 3) with ENAH and VASP. Interacts with ALKBH4, talin, actin, alpha-actinin, GRIP1 and PXN (By similarity). Interacts (via LIM domain 2) with ACTL7A (via N-terminus). Heterodimer with ACTL7A; the heterodimer interacts with ENAH to form a heterotrimer (By similarity).</text>
</comment>
<comment type="subcellular location">
    <subcellularLocation>
        <location evidence="1">Cytoplasm</location>
    </subcellularLocation>
    <subcellularLocation>
        <location evidence="1">Cell junction</location>
        <location evidence="1">Focal adhesion</location>
    </subcellularLocation>
    <text evidence="1">Detected along actin stress fibers.</text>
</comment>
<comment type="domain">
    <text evidence="1">The N-terminal and the C-terminal halves of the protein can associate with each other, thereby hindering interactions with ZYX.</text>
</comment>
<comment type="similarity">
    <text evidence="5">Belongs to the prickle / espinas / testin family.</text>
</comment>
<name>TES_MUNRE</name>
<evidence type="ECO:0000250" key="1"/>
<evidence type="ECO:0000255" key="2">
    <source>
        <dbReference type="PROSITE-ProRule" id="PRU00125"/>
    </source>
</evidence>
<evidence type="ECO:0000255" key="3">
    <source>
        <dbReference type="PROSITE-ProRule" id="PRU00636"/>
    </source>
</evidence>
<evidence type="ECO:0000256" key="4">
    <source>
        <dbReference type="SAM" id="MobiDB-lite"/>
    </source>
</evidence>
<evidence type="ECO:0000305" key="5"/>
<keyword id="KW-0965">Cell junction</keyword>
<keyword id="KW-0963">Cytoplasm</keyword>
<keyword id="KW-0440">LIM domain</keyword>
<keyword id="KW-0479">Metal-binding</keyword>
<keyword id="KW-0677">Repeat</keyword>
<keyword id="KW-0862">Zinc</keyword>
<protein>
    <recommendedName>
        <fullName>Testin</fullName>
    </recommendedName>
</protein>
<sequence length="421" mass="48004">MDLEAKVKKMGLGHEQGFGAPCLKCKEKCEGFELHFWRKICRNCKCGQEEHDVLLSNEEDRKVGKLFEDTKYTTLIAKLKSDGIPMYKRNVMILTNPVAAKKNVSINTVTYEWAPPVQNQALARQYMQMLPKEKQPVAGSEGAQYRKKQLAKQLPAHDQDPSKCHELSPKEVKEMEQFVKKYKSEALGVGDVKLPRDMNTQGPNRMYIPGGDRSTTTAVGAMEDKSAEHKRTQYSCYCCKLSMKEGDPAIYAERAGYDKLWHPACFVCSACHELLVDMIYFWKNGKLYCGRHYCDSEKPRCAGCDELIFSNEYTQAENQNWHLKHFCCFDCDNILAGEIYVMVNDKPVCKPCYVKNHAVVCQGCHNAIDPEVQRVSYNNFSWHASTECFLCSCCSRCLIGQKFMPVEGMVFCSVECKKMMS</sequence>
<gene>
    <name type="primary">TES</name>
</gene>
<organism>
    <name type="scientific">Muntiacus reevesi</name>
    <name type="common">Reeves' muntjac</name>
    <name type="synonym">Cervus reevesi</name>
    <dbReference type="NCBI Taxonomy" id="9886"/>
    <lineage>
        <taxon>Eukaryota</taxon>
        <taxon>Metazoa</taxon>
        <taxon>Chordata</taxon>
        <taxon>Craniata</taxon>
        <taxon>Vertebrata</taxon>
        <taxon>Euteleostomi</taxon>
        <taxon>Mammalia</taxon>
        <taxon>Eutheria</taxon>
        <taxon>Laurasiatheria</taxon>
        <taxon>Artiodactyla</taxon>
        <taxon>Ruminantia</taxon>
        <taxon>Pecora</taxon>
        <taxon>Cervidae</taxon>
        <taxon>Muntiacinae</taxon>
        <taxon>Muntiacus</taxon>
    </lineage>
</organism>